<organism>
    <name type="scientific">Odorrana versabilis</name>
    <name type="common">Chinese bamboo leaf odorous frog</name>
    <name type="synonym">Rana versabilis</name>
    <dbReference type="NCBI Taxonomy" id="326940"/>
    <lineage>
        <taxon>Eukaryota</taxon>
        <taxon>Metazoa</taxon>
        <taxon>Chordata</taxon>
        <taxon>Craniata</taxon>
        <taxon>Vertebrata</taxon>
        <taxon>Euteleostomi</taxon>
        <taxon>Amphibia</taxon>
        <taxon>Batrachia</taxon>
        <taxon>Anura</taxon>
        <taxon>Neobatrachia</taxon>
        <taxon>Ranoidea</taxon>
        <taxon>Ranidae</taxon>
        <taxon>Odorrana</taxon>
    </lineage>
</organism>
<reference key="1">
    <citation type="journal article" date="2006" name="Peptides">
        <title>The Chinese bamboo leaf odorous frog (Rana (odorrana) versabilis) and north american rana frogs share the same families of skin antimicrobial peptides.</title>
        <authorList>
            <person name="Chen T."/>
            <person name="Zhou M."/>
            <person name="Rao P."/>
            <person name="Walker B."/>
            <person name="Shaw C."/>
        </authorList>
    </citation>
    <scope>NUCLEOTIDE SEQUENCE [MRNA]</scope>
    <scope>MASS SPECTROMETRY</scope>
    <source>
        <tissue>Skin secretion</tissue>
    </source>
</reference>
<keyword id="KW-0878">Amphibian defense peptide</keyword>
<keyword id="KW-0044">Antibiotic</keyword>
<keyword id="KW-0929">Antimicrobial</keyword>
<keyword id="KW-0165">Cleavage on pair of basic residues</keyword>
<keyword id="KW-1015">Disulfide bond</keyword>
<keyword id="KW-0964">Secreted</keyword>
<keyword id="KW-0732">Signal</keyword>
<sequence>MFTLKKSFLLLFFLGTITLSLCEEERGADDDDGEEEVKRGIMDTVKGVAKTVAASLLDKLKCKITGC</sequence>
<feature type="signal peptide" evidence="2">
    <location>
        <begin position="1"/>
        <end position="22"/>
    </location>
</feature>
<feature type="propeptide" id="PRO_0000268217">
    <location>
        <begin position="23"/>
        <end position="39"/>
    </location>
</feature>
<feature type="peptide" id="PRO_0000268218" description="Ranatuerin-2Vb">
    <location>
        <begin position="40"/>
        <end position="67"/>
    </location>
</feature>
<feature type="disulfide bond">
    <location>
        <begin position="62"/>
        <end position="67"/>
    </location>
</feature>
<name>RN2B_ODOVE</name>
<evidence type="ECO:0000250" key="1"/>
<evidence type="ECO:0000255" key="2"/>
<evidence type="ECO:0000269" key="3">
    <source>
    </source>
</evidence>
<evidence type="ECO:0000305" key="4"/>
<accession>Q1JS90</accession>
<proteinExistence type="evidence at protein level"/>
<dbReference type="EMBL" id="AM113511">
    <property type="protein sequence ID" value="CAJ34607.1"/>
    <property type="molecule type" value="mRNA"/>
</dbReference>
<dbReference type="SMR" id="Q1JS90"/>
<dbReference type="GO" id="GO:0005576">
    <property type="term" value="C:extracellular region"/>
    <property type="evidence" value="ECO:0007669"/>
    <property type="project" value="UniProtKB-SubCell"/>
</dbReference>
<dbReference type="GO" id="GO:0050829">
    <property type="term" value="P:defense response to Gram-negative bacterium"/>
    <property type="evidence" value="ECO:0007669"/>
    <property type="project" value="UniProtKB-ARBA"/>
</dbReference>
<dbReference type="GO" id="GO:0050830">
    <property type="term" value="P:defense response to Gram-positive bacterium"/>
    <property type="evidence" value="ECO:0007669"/>
    <property type="project" value="UniProtKB-ARBA"/>
</dbReference>
<dbReference type="InterPro" id="IPR012521">
    <property type="entry name" value="Antimicrobial_frog_2"/>
</dbReference>
<dbReference type="InterPro" id="IPR004275">
    <property type="entry name" value="Frog_antimicrobial_propeptide"/>
</dbReference>
<dbReference type="Pfam" id="PF08023">
    <property type="entry name" value="Antimicrobial_2"/>
    <property type="match status" value="1"/>
</dbReference>
<dbReference type="Pfam" id="PF03032">
    <property type="entry name" value="FSAP_sig_propep"/>
    <property type="match status" value="1"/>
</dbReference>
<protein>
    <recommendedName>
        <fullName>Ranatuerin-2Vb</fullName>
        <shortName>ranat2Vb</shortName>
    </recommendedName>
    <alternativeName>
        <fullName>2VEb</fullName>
    </alternativeName>
</protein>
<comment type="function">
    <text evidence="1">Antimicrobial peptide.</text>
</comment>
<comment type="subcellular location">
    <subcellularLocation>
        <location>Secreted</location>
    </subcellularLocation>
</comment>
<comment type="tissue specificity">
    <text>Expressed by the skin glands.</text>
</comment>
<comment type="mass spectrometry"/>
<comment type="similarity">
    <text evidence="4">Belongs to the frog skin active peptide (FSAP) family. Ranatuerin subfamily.</text>
</comment>